<organism>
    <name type="scientific">Homo sapiens</name>
    <name type="common">Human</name>
    <dbReference type="NCBI Taxonomy" id="9606"/>
    <lineage>
        <taxon>Eukaryota</taxon>
        <taxon>Metazoa</taxon>
        <taxon>Chordata</taxon>
        <taxon>Craniata</taxon>
        <taxon>Vertebrata</taxon>
        <taxon>Euteleostomi</taxon>
        <taxon>Mammalia</taxon>
        <taxon>Eutheria</taxon>
        <taxon>Euarchontoglires</taxon>
        <taxon>Primates</taxon>
        <taxon>Haplorrhini</taxon>
        <taxon>Catarrhini</taxon>
        <taxon>Hominidae</taxon>
        <taxon>Homo</taxon>
    </lineage>
</organism>
<name>DPM2_HUMAN</name>
<dbReference type="EMBL" id="AB013361">
    <property type="protein sequence ID" value="BAA33974.1"/>
    <property type="molecule type" value="mRNA"/>
</dbReference>
<dbReference type="EMBL" id="AF061729">
    <property type="protein sequence ID" value="AAG43140.1"/>
    <property type="molecule type" value="mRNA"/>
</dbReference>
<dbReference type="EMBL" id="CR542134">
    <property type="protein sequence ID" value="CAG46931.1"/>
    <property type="molecule type" value="mRNA"/>
</dbReference>
<dbReference type="EMBL" id="AB451329">
    <property type="protein sequence ID" value="BAG70143.1"/>
    <property type="molecule type" value="mRNA"/>
</dbReference>
<dbReference type="EMBL" id="AB451473">
    <property type="protein sequence ID" value="BAG70287.1"/>
    <property type="molecule type" value="mRNA"/>
</dbReference>
<dbReference type="EMBL" id="AL157935">
    <property type="status" value="NOT_ANNOTATED_CDS"/>
    <property type="molecule type" value="Genomic_DNA"/>
</dbReference>
<dbReference type="EMBL" id="CH471090">
    <property type="protein sequence ID" value="EAW87730.1"/>
    <property type="molecule type" value="Genomic_DNA"/>
</dbReference>
<dbReference type="EMBL" id="BC015233">
    <property type="protein sequence ID" value="AAH15233.1"/>
    <property type="molecule type" value="mRNA"/>
</dbReference>
<dbReference type="EMBL" id="BC107863">
    <property type="protein sequence ID" value="AAI07864.1"/>
    <property type="molecule type" value="mRNA"/>
</dbReference>
<dbReference type="CCDS" id="CCDS6886.1"/>
<dbReference type="RefSeq" id="NP_003854.1">
    <property type="nucleotide sequence ID" value="NM_003863.4"/>
</dbReference>
<dbReference type="SMR" id="O94777"/>
<dbReference type="BioGRID" id="114345">
    <property type="interactions" value="60"/>
</dbReference>
<dbReference type="ComplexPortal" id="CPX-6268">
    <property type="entry name" value="Dolichol-phosphate mannosyltransferase complex"/>
</dbReference>
<dbReference type="ComplexPortal" id="CPX-6502">
    <property type="entry name" value="Glycosylphosphatidylinositol-N-acetylglucosaminyltransferase complex"/>
</dbReference>
<dbReference type="CORUM" id="O94777"/>
<dbReference type="FunCoup" id="O94777">
    <property type="interactions" value="169"/>
</dbReference>
<dbReference type="IntAct" id="O94777">
    <property type="interactions" value="52"/>
</dbReference>
<dbReference type="STRING" id="9606.ENSP00000322181"/>
<dbReference type="BioMuta" id="DPM2"/>
<dbReference type="MassIVE" id="O94777"/>
<dbReference type="PaxDb" id="9606-ENSP00000322181"/>
<dbReference type="PeptideAtlas" id="O94777"/>
<dbReference type="ProteomicsDB" id="50437"/>
<dbReference type="TopDownProteomics" id="O94777"/>
<dbReference type="Antibodypedia" id="44831">
    <property type="antibodies" value="40 antibodies from 15 providers"/>
</dbReference>
<dbReference type="DNASU" id="8818"/>
<dbReference type="Ensembl" id="ENST00000314392.13">
    <property type="protein sequence ID" value="ENSP00000322181.8"/>
    <property type="gene ID" value="ENSG00000136908.18"/>
</dbReference>
<dbReference type="GeneID" id="8818"/>
<dbReference type="KEGG" id="hsa:8818"/>
<dbReference type="MANE-Select" id="ENST00000314392.13">
    <property type="protein sequence ID" value="ENSP00000322181.8"/>
    <property type="RefSeq nucleotide sequence ID" value="NM_003863.4"/>
    <property type="RefSeq protein sequence ID" value="NP_003854.1"/>
</dbReference>
<dbReference type="UCSC" id="uc004bsv.3">
    <property type="organism name" value="human"/>
</dbReference>
<dbReference type="AGR" id="HGNC:3006"/>
<dbReference type="CTD" id="8818"/>
<dbReference type="DisGeNET" id="8818"/>
<dbReference type="GeneCards" id="DPM2"/>
<dbReference type="GeneReviews" id="DPM2"/>
<dbReference type="HGNC" id="HGNC:3006">
    <property type="gene designation" value="DPM2"/>
</dbReference>
<dbReference type="HPA" id="ENSG00000136908">
    <property type="expression patterns" value="Low tissue specificity"/>
</dbReference>
<dbReference type="MalaCards" id="DPM2"/>
<dbReference type="MIM" id="603564">
    <property type="type" value="gene"/>
</dbReference>
<dbReference type="MIM" id="615042">
    <property type="type" value="phenotype"/>
</dbReference>
<dbReference type="neXtProt" id="NX_O94777"/>
<dbReference type="OpenTargets" id="ENSG00000136908"/>
<dbReference type="Orphanet" id="329178">
    <property type="disease" value="Congenital muscular dystrophy with intellectual disability and severe epilepsy"/>
</dbReference>
<dbReference type="PharmGKB" id="PA27464"/>
<dbReference type="VEuPathDB" id="HostDB:ENSG00000136908"/>
<dbReference type="eggNOG" id="KOG3488">
    <property type="taxonomic scope" value="Eukaryota"/>
</dbReference>
<dbReference type="GeneTree" id="ENSGT00390000001098"/>
<dbReference type="HOGENOM" id="CLU_150144_2_1_1"/>
<dbReference type="InParanoid" id="O94777"/>
<dbReference type="OMA" id="YTLWIIV"/>
<dbReference type="OrthoDB" id="311279at2759"/>
<dbReference type="PAN-GO" id="O94777">
    <property type="GO annotations" value="3 GO annotations based on evolutionary models"/>
</dbReference>
<dbReference type="PhylomeDB" id="O94777"/>
<dbReference type="TreeFam" id="TF300257"/>
<dbReference type="BioCyc" id="MetaCyc:ENSG00000136908-MONOMER"/>
<dbReference type="PathwayCommons" id="O94777"/>
<dbReference type="Reactome" id="R-HSA-162699">
    <property type="pathway name" value="Synthesis of dolichyl-phosphate mannose"/>
</dbReference>
<dbReference type="Reactome" id="R-HSA-162710">
    <property type="pathway name" value="Synthesis of glycosylphosphatidylinositol (GPI)"/>
</dbReference>
<dbReference type="Reactome" id="R-HSA-4717374">
    <property type="pathway name" value="Defective DPM1 causes DPM1-CDG"/>
</dbReference>
<dbReference type="Reactome" id="R-HSA-4719360">
    <property type="pathway name" value="Defective DPM3 causes DPM3-CDG"/>
</dbReference>
<dbReference type="Reactome" id="R-HSA-4719377">
    <property type="pathway name" value="Defective DPM2 causes DPM2-CDG"/>
</dbReference>
<dbReference type="SignaLink" id="O94777"/>
<dbReference type="SIGNOR" id="O94777"/>
<dbReference type="UniPathway" id="UPA00378"/>
<dbReference type="BioGRID-ORCS" id="8818">
    <property type="hits" value="183 hits in 1154 CRISPR screens"/>
</dbReference>
<dbReference type="ChiTaRS" id="DPM2">
    <property type="organism name" value="human"/>
</dbReference>
<dbReference type="GeneWiki" id="DPM2"/>
<dbReference type="GenomeRNAi" id="8818"/>
<dbReference type="Pharos" id="O94777">
    <property type="development level" value="Tdark"/>
</dbReference>
<dbReference type="PRO" id="PR:O94777"/>
<dbReference type="Proteomes" id="UP000005640">
    <property type="component" value="Chromosome 9"/>
</dbReference>
<dbReference type="RNAct" id="O94777">
    <property type="molecule type" value="protein"/>
</dbReference>
<dbReference type="Bgee" id="ENSG00000136908">
    <property type="expression patterns" value="Expressed in body of pancreas and 182 other cell types or tissues"/>
</dbReference>
<dbReference type="ExpressionAtlas" id="O94777">
    <property type="expression patterns" value="baseline and differential"/>
</dbReference>
<dbReference type="GO" id="GO:0033185">
    <property type="term" value="C:dolichol-phosphate-mannose synthase complex"/>
    <property type="evidence" value="ECO:0000314"/>
    <property type="project" value="UniProtKB"/>
</dbReference>
<dbReference type="GO" id="GO:0005789">
    <property type="term" value="C:endoplasmic reticulum membrane"/>
    <property type="evidence" value="ECO:0000314"/>
    <property type="project" value="ComplexPortal"/>
</dbReference>
<dbReference type="GO" id="GO:0000506">
    <property type="term" value="C:glycosylphosphatidylinositol-N-acetylglucosaminyltransferase (GPI-GnT) complex"/>
    <property type="evidence" value="ECO:0000314"/>
    <property type="project" value="UniProtKB"/>
</dbReference>
<dbReference type="GO" id="GO:0008047">
    <property type="term" value="F:enzyme activator activity"/>
    <property type="evidence" value="ECO:0000314"/>
    <property type="project" value="HGNC-UCL"/>
</dbReference>
<dbReference type="GO" id="GO:0030234">
    <property type="term" value="F:enzyme regulator activity"/>
    <property type="evidence" value="ECO:0000318"/>
    <property type="project" value="GO_Central"/>
</dbReference>
<dbReference type="GO" id="GO:0019348">
    <property type="term" value="P:dolichol metabolic process"/>
    <property type="evidence" value="ECO:0000314"/>
    <property type="project" value="ComplexPortal"/>
</dbReference>
<dbReference type="GO" id="GO:0180047">
    <property type="term" value="P:dolichol phosphate mannose biosynthetic process"/>
    <property type="evidence" value="ECO:0000314"/>
    <property type="project" value="UniProtKB"/>
</dbReference>
<dbReference type="GO" id="GO:0006506">
    <property type="term" value="P:GPI anchor biosynthetic process"/>
    <property type="evidence" value="ECO:0000314"/>
    <property type="project" value="UniProtKB"/>
</dbReference>
<dbReference type="GO" id="GO:0006486">
    <property type="term" value="P:protein glycosylation"/>
    <property type="evidence" value="ECO:0007669"/>
    <property type="project" value="UniProtKB-UniPathway"/>
</dbReference>
<dbReference type="InterPro" id="IPR009914">
    <property type="entry name" value="DPM2"/>
</dbReference>
<dbReference type="PANTHER" id="PTHR15039">
    <property type="entry name" value="DOLICHOL PHOSPHATE-MANNOSE BIOSYNTHESIS REGULATORY PROTEIN"/>
    <property type="match status" value="1"/>
</dbReference>
<dbReference type="PANTHER" id="PTHR15039:SF11">
    <property type="entry name" value="DOLICHOL PHOSPHATE-MANNOSE BIOSYNTHESIS REGULATORY PROTEIN"/>
    <property type="match status" value="1"/>
</dbReference>
<dbReference type="Pfam" id="PF07297">
    <property type="entry name" value="DPM2"/>
    <property type="match status" value="1"/>
</dbReference>
<evidence type="ECO:0000255" key="1"/>
<evidence type="ECO:0000269" key="2">
    <source>
    </source>
</evidence>
<evidence type="ECO:0000269" key="3">
    <source>
    </source>
</evidence>
<evidence type="ECO:0000269" key="4">
    <source>
    </source>
</evidence>
<evidence type="ECO:0000269" key="5">
    <source>
    </source>
</evidence>
<evidence type="ECO:0000269" key="6">
    <source>
    </source>
</evidence>
<evidence type="ECO:0000269" key="7">
    <source>
    </source>
</evidence>
<evidence type="ECO:0000269" key="8">
    <source ref="6"/>
</evidence>
<evidence type="ECO:0000305" key="9"/>
<evidence type="ECO:0000312" key="10">
    <source>
        <dbReference type="HGNC" id="HGNC:3006"/>
    </source>
</evidence>
<sequence>MATGTDQVVGLGLVAVSLIIFTYYTAWVILLPFIDSQHVIHKYFLPRAYAVAIPLAAGLLLLLFVGLFISYVMLKTKRVTKKAQ</sequence>
<reference key="1">
    <citation type="journal article" date="1998" name="EMBO J.">
        <title>DPM2 regulates biosynthesis of dolichol phosphate-mannose in mammalian cells: correct subcellular localization and stabilization of DPM1, and binding of dolichol phosphate.</title>
        <authorList>
            <person name="Maeda Y."/>
            <person name="Tomita S."/>
            <person name="Watanabe R."/>
            <person name="Ohishi K."/>
            <person name="Kinoshita T."/>
        </authorList>
    </citation>
    <scope>NUCLEOTIDE SEQUENCE [MRNA]</scope>
</reference>
<reference key="2">
    <citation type="submission" date="1998-04" db="EMBL/GenBank/DDBJ databases">
        <authorList>
            <person name="Mao Y.M."/>
            <person name="Xie Y."/>
            <person name="Ying K."/>
        </authorList>
    </citation>
    <scope>NUCLEOTIDE SEQUENCE [LARGE SCALE MRNA]</scope>
    <source>
        <tissue>Fetal brain</tissue>
    </source>
</reference>
<reference key="3">
    <citation type="submission" date="2004-06" db="EMBL/GenBank/DDBJ databases">
        <title>Cloning of human full open reading frames in Gateway(TM) system entry vector (pDONR201).</title>
        <authorList>
            <person name="Ebert L."/>
            <person name="Schick M."/>
            <person name="Neubert P."/>
            <person name="Schatten R."/>
            <person name="Henze S."/>
            <person name="Korn B."/>
        </authorList>
    </citation>
    <scope>NUCLEOTIDE SEQUENCE [LARGE SCALE MRNA]</scope>
</reference>
<reference key="4">
    <citation type="journal article" date="2008" name="Nat. Methods">
        <title>Human protein factory for converting the transcriptome into an in vitro-expressed proteome.</title>
        <authorList>
            <person name="Goshima N."/>
            <person name="Kawamura Y."/>
            <person name="Fukumoto A."/>
            <person name="Miura A."/>
            <person name="Honma R."/>
            <person name="Satoh R."/>
            <person name="Wakamatsu A."/>
            <person name="Yamamoto J."/>
            <person name="Kimura K."/>
            <person name="Nishikawa T."/>
            <person name="Andoh T."/>
            <person name="Iida Y."/>
            <person name="Ishikawa K."/>
            <person name="Ito E."/>
            <person name="Kagawa N."/>
            <person name="Kaminaga C."/>
            <person name="Kanehori K."/>
            <person name="Kawakami B."/>
            <person name="Kenmochi K."/>
            <person name="Kimura R."/>
            <person name="Kobayashi M."/>
            <person name="Kuroita T."/>
            <person name="Kuwayama H."/>
            <person name="Maruyama Y."/>
            <person name="Matsuo K."/>
            <person name="Minami K."/>
            <person name="Mitsubori M."/>
            <person name="Mori M."/>
            <person name="Morishita R."/>
            <person name="Murase A."/>
            <person name="Nishikawa A."/>
            <person name="Nishikawa S."/>
            <person name="Okamoto T."/>
            <person name="Sakagami N."/>
            <person name="Sakamoto Y."/>
            <person name="Sasaki Y."/>
            <person name="Seki T."/>
            <person name="Sono S."/>
            <person name="Sugiyama A."/>
            <person name="Sumiya T."/>
            <person name="Takayama T."/>
            <person name="Takayama Y."/>
            <person name="Takeda H."/>
            <person name="Togashi T."/>
            <person name="Yahata K."/>
            <person name="Yamada H."/>
            <person name="Yanagisawa Y."/>
            <person name="Endo Y."/>
            <person name="Imamoto F."/>
            <person name="Kisu Y."/>
            <person name="Tanaka S."/>
            <person name="Isogai T."/>
            <person name="Imai J."/>
            <person name="Watanabe S."/>
            <person name="Nomura N."/>
        </authorList>
    </citation>
    <scope>NUCLEOTIDE SEQUENCE [LARGE SCALE MRNA]</scope>
    <scope>VARIANT SER-76</scope>
</reference>
<reference key="5">
    <citation type="journal article" date="2004" name="Nature">
        <title>DNA sequence and analysis of human chromosome 9.</title>
        <authorList>
            <person name="Humphray S.J."/>
            <person name="Oliver K."/>
            <person name="Hunt A.R."/>
            <person name="Plumb R.W."/>
            <person name="Loveland J.E."/>
            <person name="Howe K.L."/>
            <person name="Andrews T.D."/>
            <person name="Searle S."/>
            <person name="Hunt S.E."/>
            <person name="Scott C.E."/>
            <person name="Jones M.C."/>
            <person name="Ainscough R."/>
            <person name="Almeida J.P."/>
            <person name="Ambrose K.D."/>
            <person name="Ashwell R.I.S."/>
            <person name="Babbage A.K."/>
            <person name="Babbage S."/>
            <person name="Bagguley C.L."/>
            <person name="Bailey J."/>
            <person name="Banerjee R."/>
            <person name="Barker D.J."/>
            <person name="Barlow K.F."/>
            <person name="Bates K."/>
            <person name="Beasley H."/>
            <person name="Beasley O."/>
            <person name="Bird C.P."/>
            <person name="Bray-Allen S."/>
            <person name="Brown A.J."/>
            <person name="Brown J.Y."/>
            <person name="Burford D."/>
            <person name="Burrill W."/>
            <person name="Burton J."/>
            <person name="Carder C."/>
            <person name="Carter N.P."/>
            <person name="Chapman J.C."/>
            <person name="Chen Y."/>
            <person name="Clarke G."/>
            <person name="Clark S.Y."/>
            <person name="Clee C.M."/>
            <person name="Clegg S."/>
            <person name="Collier R.E."/>
            <person name="Corby N."/>
            <person name="Crosier M."/>
            <person name="Cummings A.T."/>
            <person name="Davies J."/>
            <person name="Dhami P."/>
            <person name="Dunn M."/>
            <person name="Dutta I."/>
            <person name="Dyer L.W."/>
            <person name="Earthrowl M.E."/>
            <person name="Faulkner L."/>
            <person name="Fleming C.J."/>
            <person name="Frankish A."/>
            <person name="Frankland J.A."/>
            <person name="French L."/>
            <person name="Fricker D.G."/>
            <person name="Garner P."/>
            <person name="Garnett J."/>
            <person name="Ghori J."/>
            <person name="Gilbert J.G.R."/>
            <person name="Glison C."/>
            <person name="Grafham D.V."/>
            <person name="Gribble S."/>
            <person name="Griffiths C."/>
            <person name="Griffiths-Jones S."/>
            <person name="Grocock R."/>
            <person name="Guy J."/>
            <person name="Hall R.E."/>
            <person name="Hammond S."/>
            <person name="Harley J.L."/>
            <person name="Harrison E.S.I."/>
            <person name="Hart E.A."/>
            <person name="Heath P.D."/>
            <person name="Henderson C.D."/>
            <person name="Hopkins B.L."/>
            <person name="Howard P.J."/>
            <person name="Howden P.J."/>
            <person name="Huckle E."/>
            <person name="Johnson C."/>
            <person name="Johnson D."/>
            <person name="Joy A.A."/>
            <person name="Kay M."/>
            <person name="Keenan S."/>
            <person name="Kershaw J.K."/>
            <person name="Kimberley A.M."/>
            <person name="King A."/>
            <person name="Knights A."/>
            <person name="Laird G.K."/>
            <person name="Langford C."/>
            <person name="Lawlor S."/>
            <person name="Leongamornlert D.A."/>
            <person name="Leversha M."/>
            <person name="Lloyd C."/>
            <person name="Lloyd D.M."/>
            <person name="Lovell J."/>
            <person name="Martin S."/>
            <person name="Mashreghi-Mohammadi M."/>
            <person name="Matthews L."/>
            <person name="McLaren S."/>
            <person name="McLay K.E."/>
            <person name="McMurray A."/>
            <person name="Milne S."/>
            <person name="Nickerson T."/>
            <person name="Nisbett J."/>
            <person name="Nordsiek G."/>
            <person name="Pearce A.V."/>
            <person name="Peck A.I."/>
            <person name="Porter K.M."/>
            <person name="Pandian R."/>
            <person name="Pelan S."/>
            <person name="Phillimore B."/>
            <person name="Povey S."/>
            <person name="Ramsey Y."/>
            <person name="Rand V."/>
            <person name="Scharfe M."/>
            <person name="Sehra H.K."/>
            <person name="Shownkeen R."/>
            <person name="Sims S.K."/>
            <person name="Skuce C.D."/>
            <person name="Smith M."/>
            <person name="Steward C.A."/>
            <person name="Swarbreck D."/>
            <person name="Sycamore N."/>
            <person name="Tester J."/>
            <person name="Thorpe A."/>
            <person name="Tracey A."/>
            <person name="Tromans A."/>
            <person name="Thomas D.W."/>
            <person name="Wall M."/>
            <person name="Wallis J.M."/>
            <person name="West A.P."/>
            <person name="Whitehead S.L."/>
            <person name="Willey D.L."/>
            <person name="Williams S.A."/>
            <person name="Wilming L."/>
            <person name="Wray P.W."/>
            <person name="Young L."/>
            <person name="Ashurst J.L."/>
            <person name="Coulson A."/>
            <person name="Blocker H."/>
            <person name="Durbin R.M."/>
            <person name="Sulston J.E."/>
            <person name="Hubbard T."/>
            <person name="Jackson M.J."/>
            <person name="Bentley D.R."/>
            <person name="Beck S."/>
            <person name="Rogers J."/>
            <person name="Dunham I."/>
        </authorList>
    </citation>
    <scope>NUCLEOTIDE SEQUENCE [LARGE SCALE GENOMIC DNA]</scope>
</reference>
<reference key="6">
    <citation type="submission" date="2005-07" db="EMBL/GenBank/DDBJ databases">
        <authorList>
            <person name="Mural R.J."/>
            <person name="Istrail S."/>
            <person name="Sutton G."/>
            <person name="Florea L."/>
            <person name="Halpern A.L."/>
            <person name="Mobarry C.M."/>
            <person name="Lippert R."/>
            <person name="Walenz B."/>
            <person name="Shatkay H."/>
            <person name="Dew I."/>
            <person name="Miller J.R."/>
            <person name="Flanigan M.J."/>
            <person name="Edwards N.J."/>
            <person name="Bolanos R."/>
            <person name="Fasulo D."/>
            <person name="Halldorsson B.V."/>
            <person name="Hannenhalli S."/>
            <person name="Turner R."/>
            <person name="Yooseph S."/>
            <person name="Lu F."/>
            <person name="Nusskern D.R."/>
            <person name="Shue B.C."/>
            <person name="Zheng X.H."/>
            <person name="Zhong F."/>
            <person name="Delcher A.L."/>
            <person name="Huson D.H."/>
            <person name="Kravitz S.A."/>
            <person name="Mouchard L."/>
            <person name="Reinert K."/>
            <person name="Remington K.A."/>
            <person name="Clark A.G."/>
            <person name="Waterman M.S."/>
            <person name="Eichler E.E."/>
            <person name="Adams M.D."/>
            <person name="Hunkapiller M.W."/>
            <person name="Myers E.W."/>
            <person name="Venter J.C."/>
        </authorList>
    </citation>
    <scope>NUCLEOTIDE SEQUENCE [LARGE SCALE GENOMIC DNA]</scope>
    <scope>VARIANT SER-76</scope>
</reference>
<reference key="7">
    <citation type="journal article" date="2004" name="Genome Res.">
        <title>The status, quality, and expansion of the NIH full-length cDNA project: the Mammalian Gene Collection (MGC).</title>
        <authorList>
            <consortium name="The MGC Project Team"/>
        </authorList>
    </citation>
    <scope>NUCLEOTIDE SEQUENCE [LARGE SCALE MRNA]</scope>
    <scope>VARIANT SER-76</scope>
    <source>
        <tissue>Pancreas</tissue>
    </source>
</reference>
<reference key="8">
    <citation type="journal article" date="2000" name="EMBO J.">
        <title>Human dolichol-phosphate-mannose synthase consists of three subunits, DPM1, DPM2 and DPM3.</title>
        <authorList>
            <person name="Maeda Y."/>
            <person name="Tanaka S."/>
            <person name="Hino J."/>
            <person name="Kangawa K."/>
            <person name="Kinoshita T."/>
        </authorList>
    </citation>
    <scope>PROTEIN SEQUENCE OF 2-31</scope>
    <scope>SUBUNIT</scope>
</reference>
<reference key="9">
    <citation type="journal article" date="2000" name="EMBO J.">
        <title>Initial enzyme for glycosylphosphatidylinositol biosynthesis requires PIG-P and is regulated by DPM2.</title>
        <authorList>
            <person name="Watanabe R."/>
            <person name="Murakami Y."/>
            <person name="Marmor M.D."/>
            <person name="Inoue N."/>
            <person name="Maeda Y."/>
            <person name="Hino J."/>
            <person name="Kangawa K."/>
            <person name="Julius M."/>
            <person name="Kinoshita T."/>
        </authorList>
    </citation>
    <scope>FUNCTION</scope>
    <scope>INTERACTION WITH PIGA; PIGC AND PIGQ</scope>
</reference>
<reference key="10">
    <citation type="journal article" date="2005" name="Mol. Biol. Cell">
        <title>The initial enzyme for glycosylphosphatidylinositol biosynthesis requires PIG-Y, a seventh component.</title>
        <authorList>
            <person name="Murakami Y."/>
            <person name="Siripanyaphinyo U."/>
            <person name="Hong Y."/>
            <person name="Tashima Y."/>
            <person name="Maeda Y."/>
            <person name="Kinoshita T."/>
        </authorList>
    </citation>
    <scope>FUNCTION</scope>
    <scope>COMPONENT OF GPI-GNT COMPLEX</scope>
</reference>
<reference key="11">
    <citation type="journal article" date="2012" name="Ann. Neurol.">
        <title>DPM2-CDG: a muscular dystrophy-dystroglycanopathy syndrome with severe epilepsy.</title>
        <authorList>
            <person name="Barone R."/>
            <person name="Aiello C."/>
            <person name="Race V."/>
            <person name="Morava E."/>
            <person name="Foulquier F."/>
            <person name="Riemersma M."/>
            <person name="Passarelli C."/>
            <person name="Concolino D."/>
            <person name="Carella M."/>
            <person name="Santorelli F."/>
            <person name="Vleugels W."/>
            <person name="Mercuri E."/>
            <person name="Garozzo D."/>
            <person name="Sturiale L."/>
            <person name="Messina S."/>
            <person name="Jaeken J."/>
            <person name="Fiumara A."/>
            <person name="Wevers R.A."/>
            <person name="Bertini E."/>
            <person name="Matthijs G."/>
            <person name="Lefeber D.J."/>
        </authorList>
    </citation>
    <scope>VARIANT CDG1U CYS-23</scope>
</reference>
<feature type="initiator methionine" description="Removed" evidence="2">
    <location>
        <position position="1"/>
    </location>
</feature>
<feature type="chain" id="PRO_0000220873" description="Dolichol phosphate-mannose biosynthesis regulatory protein">
    <location>
        <begin position="2"/>
        <end position="84"/>
    </location>
</feature>
<feature type="transmembrane region" description="Helical" evidence="1">
    <location>
        <begin position="11"/>
        <end position="31"/>
    </location>
</feature>
<feature type="transmembrane region" description="Helical" evidence="1">
    <location>
        <begin position="49"/>
        <end position="69"/>
    </location>
</feature>
<feature type="sequence variant" id="VAR_069745" description="In CDG1U; dbSNP:rs397514503." evidence="7">
    <original>Y</original>
    <variation>C</variation>
    <location>
        <position position="23"/>
    </location>
</feature>
<feature type="sequence variant" id="VAR_033895" description="In dbSNP:rs7997." evidence="4 6 8">
    <original>T</original>
    <variation>S</variation>
    <location>
        <position position="76"/>
    </location>
</feature>
<comment type="function">
    <text evidence="2 3 5">Regulates the biosynthesis of dolichol phosphate-mannose (PubMed:10835346). Regulatory subunit of the dolichol-phosphate mannose (DPM) synthase complex; essential for the ER localization and stable expression of DPM1 (PubMed:10835346). Part of the glycosylphosphatidylinositol-N-acetylglucosaminyltransferase (GPI-GnT) complex that catalyzes the transfer of N-acetylglucosamine from UDP-N-acetylglucosamine to phosphatidylinositol and participates in the first step of GPI biosynthesis (PubMed:16162815). May act by regulating the GPI-GNT complex (PubMed:10944123).</text>
</comment>
<comment type="pathway">
    <text evidence="2">Protein modification; protein glycosylation.</text>
</comment>
<comment type="subunit">
    <text evidence="2 3 5">Component of the dolichol-phosphate mannose (DPM) synthase complex composed of DPM1, DPM2 and DPM3; in the complex interacts directly with DPM3 (PubMed:10835346). Component of the glycosylphosphatidylinositol-N-acetylglucosaminyltransferase (GPI-GnT) complex composed at least by PIGA, PIGC, PIGH, PIGP, PIGQ, PIGY and DPM2 (PubMed:16162815). Interacts with PIGA, PIGC and PIGQ (PubMed:10944123).</text>
</comment>
<comment type="interaction">
    <interactant intactId="EBI-9097061">
        <id>O94777</id>
    </interactant>
    <interactant intactId="EBI-9087337">
        <id>Q9P2X0</id>
        <label>DPM3</label>
    </interactant>
    <organismsDiffer>false</organismsDiffer>
    <experiments>3</experiments>
</comment>
<comment type="interaction">
    <interactant intactId="EBI-9097061">
        <id>O94777</id>
    </interactant>
    <interactant intactId="EBI-26643054">
        <id>P37287</id>
        <label>PIGA</label>
    </interactant>
    <organismsDiffer>false</organismsDiffer>
    <experiments>4</experiments>
</comment>
<comment type="interaction">
    <interactant intactId="EBI-9097061">
        <id>O94777</id>
    </interactant>
    <interactant intactId="EBI-721918">
        <id>Q92535</id>
        <label>PIGC</label>
    </interactant>
    <organismsDiffer>false</organismsDiffer>
    <experiments>2</experiments>
</comment>
<comment type="interaction">
    <interactant intactId="EBI-9097061">
        <id>O94777</id>
    </interactant>
    <interactant intactId="EBI-2339260">
        <id>Q9BRB3</id>
        <label>PIGQ</label>
    </interactant>
    <organismsDiffer>false</organismsDiffer>
    <experiments>2</experiments>
</comment>
<comment type="subcellular location">
    <subcellularLocation>
        <location>Endoplasmic reticulum membrane</location>
        <topology>Multi-pass membrane protein</topology>
    </subcellularLocation>
</comment>
<comment type="disease" evidence="7">
    <disease id="DI-03685">
        <name>Congenital disorder of glycosylation 1U</name>
        <acronym>CDG1U</acronym>
        <description>A form of congenital disorder of glycosylation, a multisystem disorder caused by a defect in glycoprotein biosynthesis and characterized by under-glycosylated serum glycoproteins. Congenital disorders of glycosylation result in a wide variety of clinical features, such as defects in the nervous system development, psychomotor retardation, dysmorphic features, hypotonia, coagulation disorders, and immunodeficiency. The broad spectrum of features reflects the critical role of N-glycoproteins during embryonic development, differentiation, and maintenance of cell functions. Some CDG1U patients have dystrophic changes seen on muscle biopsy and reduced O-mannosyl glycans on alpha-dystroglycan.</description>
        <dbReference type="MIM" id="615042"/>
    </disease>
    <text>The disease is caused by variants affecting the gene represented in this entry.</text>
</comment>
<comment type="similarity">
    <text evidence="9">Belongs to the DPM2 family.</text>
</comment>
<proteinExistence type="evidence at protein level"/>
<keyword id="KW-0900">Congenital disorder of glycosylation</keyword>
<keyword id="KW-0912">Congenital muscular dystrophy</keyword>
<keyword id="KW-0903">Direct protein sequencing</keyword>
<keyword id="KW-0225">Disease variant</keyword>
<keyword id="KW-1215">Dystroglycanopathy</keyword>
<keyword id="KW-0256">Endoplasmic reticulum</keyword>
<keyword id="KW-0472">Membrane</keyword>
<keyword id="KW-1267">Proteomics identification</keyword>
<keyword id="KW-1185">Reference proteome</keyword>
<keyword id="KW-0812">Transmembrane</keyword>
<keyword id="KW-1133">Transmembrane helix</keyword>
<accession>O94777</accession>
<accession>Q5XKK9</accession>
<accession>Q6FGH3</accession>
<protein>
    <recommendedName>
        <fullName evidence="9">Dolichol phosphate-mannose biosynthesis regulatory protein</fullName>
    </recommendedName>
    <alternativeName>
        <fullName>Dolichol-phosphate mannose synthase subunit 2</fullName>
        <shortName>DPM synthase subunit 2</shortName>
    </alternativeName>
</protein>
<gene>
    <name evidence="10" type="primary">DPM2</name>
    <name type="ORF">My026</name>
</gene>